<accession>Q9KSZ6</accession>
<keyword id="KW-0030">Aminoacyl-tRNA synthetase</keyword>
<keyword id="KW-0067">ATP-binding</keyword>
<keyword id="KW-0963">Cytoplasm</keyword>
<keyword id="KW-0436">Ligase</keyword>
<keyword id="KW-0547">Nucleotide-binding</keyword>
<keyword id="KW-0648">Protein biosynthesis</keyword>
<keyword id="KW-1185">Reference proteome</keyword>
<name>SYS_VIBCH</name>
<reference key="1">
    <citation type="journal article" date="2000" name="Nature">
        <title>DNA sequence of both chromosomes of the cholera pathogen Vibrio cholerae.</title>
        <authorList>
            <person name="Heidelberg J.F."/>
            <person name="Eisen J.A."/>
            <person name="Nelson W.C."/>
            <person name="Clayton R.A."/>
            <person name="Gwinn M.L."/>
            <person name="Dodson R.J."/>
            <person name="Haft D.H."/>
            <person name="Hickey E.K."/>
            <person name="Peterson J.D."/>
            <person name="Umayam L.A."/>
            <person name="Gill S.R."/>
            <person name="Nelson K.E."/>
            <person name="Read T.D."/>
            <person name="Tettelin H."/>
            <person name="Richardson D.L."/>
            <person name="Ermolaeva M.D."/>
            <person name="Vamathevan J.J."/>
            <person name="Bass S."/>
            <person name="Qin H."/>
            <person name="Dragoi I."/>
            <person name="Sellers P."/>
            <person name="McDonald L.A."/>
            <person name="Utterback T.R."/>
            <person name="Fleischmann R.D."/>
            <person name="Nierman W.C."/>
            <person name="White O."/>
            <person name="Salzberg S.L."/>
            <person name="Smith H.O."/>
            <person name="Colwell R.R."/>
            <person name="Mekalanos J.J."/>
            <person name="Venter J.C."/>
            <person name="Fraser C.M."/>
        </authorList>
    </citation>
    <scope>NUCLEOTIDE SEQUENCE [LARGE SCALE GENOMIC DNA]</scope>
    <source>
        <strain>ATCC 39315 / El Tor Inaba N16961</strain>
    </source>
</reference>
<protein>
    <recommendedName>
        <fullName evidence="1">Serine--tRNA ligase</fullName>
        <ecNumber evidence="1">6.1.1.11</ecNumber>
    </recommendedName>
    <alternativeName>
        <fullName evidence="1">Seryl-tRNA synthetase</fullName>
        <shortName evidence="1">SerRS</shortName>
    </alternativeName>
    <alternativeName>
        <fullName evidence="1">Seryl-tRNA(Ser/Sec) synthetase</fullName>
    </alternativeName>
</protein>
<proteinExistence type="inferred from homology"/>
<comment type="function">
    <text evidence="1">Catalyzes the attachment of serine to tRNA(Ser). Is also able to aminoacylate tRNA(Sec) with serine, to form the misacylated tRNA L-seryl-tRNA(Sec), which will be further converted into selenocysteinyl-tRNA(Sec).</text>
</comment>
<comment type="catalytic activity">
    <reaction evidence="1">
        <text>tRNA(Ser) + L-serine + ATP = L-seryl-tRNA(Ser) + AMP + diphosphate + H(+)</text>
        <dbReference type="Rhea" id="RHEA:12292"/>
        <dbReference type="Rhea" id="RHEA-COMP:9669"/>
        <dbReference type="Rhea" id="RHEA-COMP:9703"/>
        <dbReference type="ChEBI" id="CHEBI:15378"/>
        <dbReference type="ChEBI" id="CHEBI:30616"/>
        <dbReference type="ChEBI" id="CHEBI:33019"/>
        <dbReference type="ChEBI" id="CHEBI:33384"/>
        <dbReference type="ChEBI" id="CHEBI:78442"/>
        <dbReference type="ChEBI" id="CHEBI:78533"/>
        <dbReference type="ChEBI" id="CHEBI:456215"/>
        <dbReference type="EC" id="6.1.1.11"/>
    </reaction>
</comment>
<comment type="catalytic activity">
    <reaction evidence="1">
        <text>tRNA(Sec) + L-serine + ATP = L-seryl-tRNA(Sec) + AMP + diphosphate + H(+)</text>
        <dbReference type="Rhea" id="RHEA:42580"/>
        <dbReference type="Rhea" id="RHEA-COMP:9742"/>
        <dbReference type="Rhea" id="RHEA-COMP:10128"/>
        <dbReference type="ChEBI" id="CHEBI:15378"/>
        <dbReference type="ChEBI" id="CHEBI:30616"/>
        <dbReference type="ChEBI" id="CHEBI:33019"/>
        <dbReference type="ChEBI" id="CHEBI:33384"/>
        <dbReference type="ChEBI" id="CHEBI:78442"/>
        <dbReference type="ChEBI" id="CHEBI:78533"/>
        <dbReference type="ChEBI" id="CHEBI:456215"/>
        <dbReference type="EC" id="6.1.1.11"/>
    </reaction>
</comment>
<comment type="pathway">
    <text evidence="1">Aminoacyl-tRNA biosynthesis; selenocysteinyl-tRNA(Sec) biosynthesis; L-seryl-tRNA(Sec) from L-serine and tRNA(Sec): step 1/1.</text>
</comment>
<comment type="subunit">
    <text evidence="1">Homodimer. The tRNA molecule binds across the dimer.</text>
</comment>
<comment type="subcellular location">
    <subcellularLocation>
        <location evidence="1">Cytoplasm</location>
    </subcellularLocation>
</comment>
<comment type="domain">
    <text evidence="1">Consists of two distinct domains, a catalytic core and a N-terminal extension that is involved in tRNA binding.</text>
</comment>
<comment type="similarity">
    <text evidence="1">Belongs to the class-II aminoacyl-tRNA synthetase family. Type-1 seryl-tRNA synthetase subfamily.</text>
</comment>
<feature type="chain" id="PRO_0000122153" description="Serine--tRNA ligase">
    <location>
        <begin position="1"/>
        <end position="435"/>
    </location>
</feature>
<feature type="binding site" evidence="1">
    <location>
        <begin position="242"/>
        <end position="244"/>
    </location>
    <ligand>
        <name>L-serine</name>
        <dbReference type="ChEBI" id="CHEBI:33384"/>
    </ligand>
</feature>
<feature type="binding site" evidence="1">
    <location>
        <begin position="273"/>
        <end position="275"/>
    </location>
    <ligand>
        <name>ATP</name>
        <dbReference type="ChEBI" id="CHEBI:30616"/>
    </ligand>
</feature>
<feature type="binding site" evidence="1">
    <location>
        <position position="296"/>
    </location>
    <ligand>
        <name>L-serine</name>
        <dbReference type="ChEBI" id="CHEBI:33384"/>
    </ligand>
</feature>
<feature type="binding site" evidence="1">
    <location>
        <begin position="360"/>
        <end position="363"/>
    </location>
    <ligand>
        <name>ATP</name>
        <dbReference type="ChEBI" id="CHEBI:30616"/>
    </ligand>
</feature>
<feature type="binding site" evidence="1">
    <location>
        <position position="396"/>
    </location>
    <ligand>
        <name>L-serine</name>
        <dbReference type="ChEBI" id="CHEBI:33384"/>
    </ligand>
</feature>
<sequence>MLDSKLLRTELDETAAKLARRGFKLDVETIRTLEEQRKSIQVEVENLQSTRNSISKQIGQLMASGDKAGAEAVKQQIGTLGDDLDAKKVELDAVMAQLDAITQTVPNIPDDAVPNGKDDSENVEVSRWGTPKTYDFEVKDHVDLGEMGDGLDFASATKITGARFVVMKGQFARLHRAIAQFMLDLHTDQHGYTELYVPYLVNAETLFGTGQLPKFGQDLFHTEPLTEKASDEEPRRLSLIPTAEVPVTNLVRDTILDEAELPLKMTAHTPCFRSEAGSYGRDTRGLIRMHQFDKVELVQITRPEDSMAALEELTGHAEKVLQLLELPYRKVILCTGDMGFGSCKTYDLEVWVPAQKTYREISSCSNMWDFQARRMQARFRRKGEKKPELVHTLNGSGLAVGRTMVAILENYQEADGRIAIPAVLQKYMGGLTHIG</sequence>
<organism>
    <name type="scientific">Vibrio cholerae serotype O1 (strain ATCC 39315 / El Tor Inaba N16961)</name>
    <dbReference type="NCBI Taxonomy" id="243277"/>
    <lineage>
        <taxon>Bacteria</taxon>
        <taxon>Pseudomonadati</taxon>
        <taxon>Pseudomonadota</taxon>
        <taxon>Gammaproteobacteria</taxon>
        <taxon>Vibrionales</taxon>
        <taxon>Vibrionaceae</taxon>
        <taxon>Vibrio</taxon>
    </lineage>
</organism>
<dbReference type="EC" id="6.1.1.11" evidence="1"/>
<dbReference type="EMBL" id="AE003852">
    <property type="protein sequence ID" value="AAF94269.1"/>
    <property type="molecule type" value="Genomic_DNA"/>
</dbReference>
<dbReference type="PIR" id="A82242">
    <property type="entry name" value="A82242"/>
</dbReference>
<dbReference type="RefSeq" id="NP_230755.1">
    <property type="nucleotide sequence ID" value="NC_002505.1"/>
</dbReference>
<dbReference type="RefSeq" id="WP_000887349.1">
    <property type="nucleotide sequence ID" value="NZ_LT906614.1"/>
</dbReference>
<dbReference type="SMR" id="Q9KSZ6"/>
<dbReference type="STRING" id="243277.VC_1110"/>
<dbReference type="DNASU" id="2614380"/>
<dbReference type="EnsemblBacteria" id="AAF94269">
    <property type="protein sequence ID" value="AAF94269"/>
    <property type="gene ID" value="VC_1110"/>
</dbReference>
<dbReference type="GeneID" id="88785456"/>
<dbReference type="KEGG" id="vch:VC_1110"/>
<dbReference type="PATRIC" id="fig|243277.26.peg.1059"/>
<dbReference type="eggNOG" id="COG0172">
    <property type="taxonomic scope" value="Bacteria"/>
</dbReference>
<dbReference type="HOGENOM" id="CLU_023797_1_1_6"/>
<dbReference type="UniPathway" id="UPA00906">
    <property type="reaction ID" value="UER00895"/>
</dbReference>
<dbReference type="Proteomes" id="UP000000584">
    <property type="component" value="Chromosome 1"/>
</dbReference>
<dbReference type="GO" id="GO:0005737">
    <property type="term" value="C:cytoplasm"/>
    <property type="evidence" value="ECO:0007669"/>
    <property type="project" value="UniProtKB-SubCell"/>
</dbReference>
<dbReference type="GO" id="GO:0005524">
    <property type="term" value="F:ATP binding"/>
    <property type="evidence" value="ECO:0007669"/>
    <property type="project" value="UniProtKB-UniRule"/>
</dbReference>
<dbReference type="GO" id="GO:0004828">
    <property type="term" value="F:serine-tRNA ligase activity"/>
    <property type="evidence" value="ECO:0007669"/>
    <property type="project" value="UniProtKB-UniRule"/>
</dbReference>
<dbReference type="GO" id="GO:0016260">
    <property type="term" value="P:selenocysteine biosynthetic process"/>
    <property type="evidence" value="ECO:0007669"/>
    <property type="project" value="UniProtKB-UniRule"/>
</dbReference>
<dbReference type="GO" id="GO:0006434">
    <property type="term" value="P:seryl-tRNA aminoacylation"/>
    <property type="evidence" value="ECO:0007669"/>
    <property type="project" value="UniProtKB-UniRule"/>
</dbReference>
<dbReference type="CDD" id="cd00770">
    <property type="entry name" value="SerRS_core"/>
    <property type="match status" value="1"/>
</dbReference>
<dbReference type="FunFam" id="1.10.287.40:FF:000001">
    <property type="entry name" value="Serine--tRNA ligase"/>
    <property type="match status" value="1"/>
</dbReference>
<dbReference type="FunFam" id="3.30.930.10:FF:000018">
    <property type="entry name" value="Serine--tRNA ligase"/>
    <property type="match status" value="1"/>
</dbReference>
<dbReference type="Gene3D" id="3.30.930.10">
    <property type="entry name" value="Bira Bifunctional Protein, Domain 2"/>
    <property type="match status" value="1"/>
</dbReference>
<dbReference type="Gene3D" id="1.10.287.40">
    <property type="entry name" value="Serine-tRNA synthetase, tRNA binding domain"/>
    <property type="match status" value="1"/>
</dbReference>
<dbReference type="HAMAP" id="MF_00176">
    <property type="entry name" value="Ser_tRNA_synth_type1"/>
    <property type="match status" value="1"/>
</dbReference>
<dbReference type="InterPro" id="IPR002314">
    <property type="entry name" value="aa-tRNA-synt_IIb"/>
</dbReference>
<dbReference type="InterPro" id="IPR006195">
    <property type="entry name" value="aa-tRNA-synth_II"/>
</dbReference>
<dbReference type="InterPro" id="IPR045864">
    <property type="entry name" value="aa-tRNA-synth_II/BPL/LPL"/>
</dbReference>
<dbReference type="InterPro" id="IPR002317">
    <property type="entry name" value="Ser-tRNA-ligase_type_1"/>
</dbReference>
<dbReference type="InterPro" id="IPR015866">
    <property type="entry name" value="Ser-tRNA-synth_1_N"/>
</dbReference>
<dbReference type="InterPro" id="IPR042103">
    <property type="entry name" value="SerRS_1_N_sf"/>
</dbReference>
<dbReference type="InterPro" id="IPR033729">
    <property type="entry name" value="SerRS_core"/>
</dbReference>
<dbReference type="InterPro" id="IPR010978">
    <property type="entry name" value="tRNA-bd_arm"/>
</dbReference>
<dbReference type="NCBIfam" id="TIGR00414">
    <property type="entry name" value="serS"/>
    <property type="match status" value="1"/>
</dbReference>
<dbReference type="PANTHER" id="PTHR43697:SF1">
    <property type="entry name" value="SERINE--TRNA LIGASE"/>
    <property type="match status" value="1"/>
</dbReference>
<dbReference type="PANTHER" id="PTHR43697">
    <property type="entry name" value="SERYL-TRNA SYNTHETASE"/>
    <property type="match status" value="1"/>
</dbReference>
<dbReference type="Pfam" id="PF02403">
    <property type="entry name" value="Seryl_tRNA_N"/>
    <property type="match status" value="1"/>
</dbReference>
<dbReference type="Pfam" id="PF00587">
    <property type="entry name" value="tRNA-synt_2b"/>
    <property type="match status" value="1"/>
</dbReference>
<dbReference type="PIRSF" id="PIRSF001529">
    <property type="entry name" value="Ser-tRNA-synth_IIa"/>
    <property type="match status" value="1"/>
</dbReference>
<dbReference type="PRINTS" id="PR00981">
    <property type="entry name" value="TRNASYNTHSER"/>
</dbReference>
<dbReference type="SUPFAM" id="SSF55681">
    <property type="entry name" value="Class II aaRS and biotin synthetases"/>
    <property type="match status" value="1"/>
</dbReference>
<dbReference type="SUPFAM" id="SSF46589">
    <property type="entry name" value="tRNA-binding arm"/>
    <property type="match status" value="1"/>
</dbReference>
<dbReference type="PROSITE" id="PS50862">
    <property type="entry name" value="AA_TRNA_LIGASE_II"/>
    <property type="match status" value="1"/>
</dbReference>
<evidence type="ECO:0000255" key="1">
    <source>
        <dbReference type="HAMAP-Rule" id="MF_00176"/>
    </source>
</evidence>
<gene>
    <name evidence="1" type="primary">serS</name>
    <name type="ordered locus">VC_1110</name>
</gene>